<accession>Q9A3N5</accession>
<name>Y3167_CAUVC</name>
<protein>
    <recommendedName>
        <fullName>Glucokinase-like protein CC_3167</fullName>
    </recommendedName>
</protein>
<evidence type="ECO:0000305" key="1"/>
<reference key="1">
    <citation type="journal article" date="2001" name="Proc. Natl. Acad. Sci. U.S.A.">
        <title>Complete genome sequence of Caulobacter crescentus.</title>
        <authorList>
            <person name="Nierman W.C."/>
            <person name="Feldblyum T.V."/>
            <person name="Laub M.T."/>
            <person name="Paulsen I.T."/>
            <person name="Nelson K.E."/>
            <person name="Eisen J.A."/>
            <person name="Heidelberg J.F."/>
            <person name="Alley M.R.K."/>
            <person name="Ohta N."/>
            <person name="Maddock J.R."/>
            <person name="Potocka I."/>
            <person name="Nelson W.C."/>
            <person name="Newton A."/>
            <person name="Stephens C."/>
            <person name="Phadke N.D."/>
            <person name="Ely B."/>
            <person name="DeBoy R.T."/>
            <person name="Dodson R.J."/>
            <person name="Durkin A.S."/>
            <person name="Gwinn M.L."/>
            <person name="Haft D.H."/>
            <person name="Kolonay J.F."/>
            <person name="Smit J."/>
            <person name="Craven M.B."/>
            <person name="Khouri H.M."/>
            <person name="Shetty J."/>
            <person name="Berry K.J."/>
            <person name="Utterback T.R."/>
            <person name="Tran K."/>
            <person name="Wolf A.M."/>
            <person name="Vamathevan J.J."/>
            <person name="Ermolaeva M.D."/>
            <person name="White O."/>
            <person name="Salzberg S.L."/>
            <person name="Venter J.C."/>
            <person name="Shapiro L."/>
            <person name="Fraser C.M."/>
        </authorList>
    </citation>
    <scope>NUCLEOTIDE SEQUENCE [LARGE SCALE GENOMIC DNA]</scope>
    <source>
        <strain>ATCC 19089 / CIP 103742 / CB 15</strain>
    </source>
</reference>
<feature type="chain" id="PRO_0000215148" description="Glucokinase-like protein CC_3167">
    <location>
        <begin position="1"/>
        <end position="315"/>
    </location>
</feature>
<sequence length="315" mass="33030">MNGRDLALALVSPGDAPRGHRDLACASLKALEEHLIDAVSEHSADGLIGAAVCGAGPEIDGAIALTAGDFTLTQAWLRAVLKTPRVSLLNDFAACALGAPRLAPSAMRLIHEGKPGRNAQIAVIGPNLGLGVAALTPHRTDGWTPVVSEGGHIDFTPGEPREVPVFEALQARHGRVSAEHFLSQQGLADIYAALGGGLDDSDEVILARVRDGDETAREALSIFSALLGAFAGDAALSFAARGGVYINSPLMERIDGLLDQAAFSRRFEDKGRMSAYLKDIPVYLAVGRCTLLGLSALFTASDLRYEAAEVKVLDC</sequence>
<gene>
    <name type="ordered locus">CC_3167</name>
</gene>
<keyword id="KW-0418">Kinase</keyword>
<keyword id="KW-1185">Reference proteome</keyword>
<keyword id="KW-0808">Transferase</keyword>
<comment type="similarity">
    <text evidence="1">Belongs to the bacterial glucokinase family.</text>
</comment>
<proteinExistence type="inferred from homology"/>
<organism>
    <name type="scientific">Caulobacter vibrioides (strain ATCC 19089 / CIP 103742 / CB 15)</name>
    <name type="common">Caulobacter crescentus</name>
    <dbReference type="NCBI Taxonomy" id="190650"/>
    <lineage>
        <taxon>Bacteria</taxon>
        <taxon>Pseudomonadati</taxon>
        <taxon>Pseudomonadota</taxon>
        <taxon>Alphaproteobacteria</taxon>
        <taxon>Caulobacterales</taxon>
        <taxon>Caulobacteraceae</taxon>
        <taxon>Caulobacter</taxon>
    </lineage>
</organism>
<dbReference type="EMBL" id="AE005673">
    <property type="protein sequence ID" value="AAK25129.1"/>
    <property type="molecule type" value="Genomic_DNA"/>
</dbReference>
<dbReference type="PIR" id="E87641">
    <property type="entry name" value="E87641"/>
</dbReference>
<dbReference type="RefSeq" id="NP_421961.1">
    <property type="nucleotide sequence ID" value="NC_002696.2"/>
</dbReference>
<dbReference type="SMR" id="Q9A3N5"/>
<dbReference type="STRING" id="190650.CC_3167"/>
<dbReference type="EnsemblBacteria" id="AAK25129">
    <property type="protein sequence ID" value="AAK25129"/>
    <property type="gene ID" value="CC_3167"/>
</dbReference>
<dbReference type="KEGG" id="ccr:CC_3167"/>
<dbReference type="PATRIC" id="fig|190650.5.peg.3175"/>
<dbReference type="eggNOG" id="COG0837">
    <property type="taxonomic scope" value="Bacteria"/>
</dbReference>
<dbReference type="HOGENOM" id="CLU_042582_1_0_5"/>
<dbReference type="BioCyc" id="CAULO:CC3167-MONOMER"/>
<dbReference type="Proteomes" id="UP000001816">
    <property type="component" value="Chromosome"/>
</dbReference>
<dbReference type="GO" id="GO:0005829">
    <property type="term" value="C:cytosol"/>
    <property type="evidence" value="ECO:0007669"/>
    <property type="project" value="TreeGrafter"/>
</dbReference>
<dbReference type="GO" id="GO:0005524">
    <property type="term" value="F:ATP binding"/>
    <property type="evidence" value="ECO:0007669"/>
    <property type="project" value="InterPro"/>
</dbReference>
<dbReference type="GO" id="GO:0005536">
    <property type="term" value="F:D-glucose binding"/>
    <property type="evidence" value="ECO:0007669"/>
    <property type="project" value="InterPro"/>
</dbReference>
<dbReference type="GO" id="GO:0004340">
    <property type="term" value="F:glucokinase activity"/>
    <property type="evidence" value="ECO:0007669"/>
    <property type="project" value="InterPro"/>
</dbReference>
<dbReference type="GO" id="GO:0006096">
    <property type="term" value="P:glycolytic process"/>
    <property type="evidence" value="ECO:0007669"/>
    <property type="project" value="InterPro"/>
</dbReference>
<dbReference type="CDD" id="cd24008">
    <property type="entry name" value="ASKHA_NBD_GLK"/>
    <property type="match status" value="1"/>
</dbReference>
<dbReference type="Gene3D" id="3.30.420.40">
    <property type="match status" value="1"/>
</dbReference>
<dbReference type="Gene3D" id="3.40.367.20">
    <property type="match status" value="1"/>
</dbReference>
<dbReference type="InterPro" id="IPR043129">
    <property type="entry name" value="ATPase_NBD"/>
</dbReference>
<dbReference type="InterPro" id="IPR050201">
    <property type="entry name" value="Bacterial_glucokinase"/>
</dbReference>
<dbReference type="InterPro" id="IPR003836">
    <property type="entry name" value="Glucokinase"/>
</dbReference>
<dbReference type="PANTHER" id="PTHR47690">
    <property type="entry name" value="GLUCOKINASE"/>
    <property type="match status" value="1"/>
</dbReference>
<dbReference type="PANTHER" id="PTHR47690:SF1">
    <property type="entry name" value="GLUCOKINASE"/>
    <property type="match status" value="1"/>
</dbReference>
<dbReference type="Pfam" id="PF02685">
    <property type="entry name" value="Glucokinase"/>
    <property type="match status" value="1"/>
</dbReference>
<dbReference type="SUPFAM" id="SSF53067">
    <property type="entry name" value="Actin-like ATPase domain"/>
    <property type="match status" value="1"/>
</dbReference>